<evidence type="ECO:0000250" key="1"/>
<evidence type="ECO:0000250" key="2">
    <source>
        <dbReference type="UniProtKB" id="P01100"/>
    </source>
</evidence>
<evidence type="ECO:0000250" key="3">
    <source>
        <dbReference type="UniProtKB" id="P01101"/>
    </source>
</evidence>
<evidence type="ECO:0000250" key="4">
    <source>
        <dbReference type="UniProtKB" id="P12841"/>
    </source>
</evidence>
<evidence type="ECO:0000255" key="5">
    <source>
        <dbReference type="PROSITE-ProRule" id="PRU00978"/>
    </source>
</evidence>
<evidence type="ECO:0000256" key="6">
    <source>
        <dbReference type="SAM" id="MobiDB-lite"/>
    </source>
</evidence>
<evidence type="ECO:0000305" key="7"/>
<reference key="1">
    <citation type="submission" date="1997-12" db="EMBL/GenBank/DDBJ databases">
        <authorList>
            <person name="Mimmack M.L."/>
        </authorList>
    </citation>
    <scope>NUCLEOTIDE SEQUENCE OF 1-96</scope>
</reference>
<reference key="2">
    <citation type="submission" date="1997-03" db="EMBL/GenBank/DDBJ databases">
        <authorList>
            <person name="Ing N.H."/>
            <person name="Bhattacharyya S."/>
        </authorList>
    </citation>
    <scope>NUCLEOTIDE SEQUENCE OF 90-195</scope>
</reference>
<gene>
    <name type="primary">FOS</name>
</gene>
<keyword id="KW-0963">Cytoplasm</keyword>
<keyword id="KW-0238">DNA-binding</keyword>
<keyword id="KW-0256">Endoplasmic reticulum</keyword>
<keyword id="KW-1017">Isopeptide bond</keyword>
<keyword id="KW-0539">Nucleus</keyword>
<keyword id="KW-0597">Phosphoprotein</keyword>
<keyword id="KW-0656">Proto-oncogene</keyword>
<keyword id="KW-1185">Reference proteome</keyword>
<keyword id="KW-0832">Ubl conjugation</keyword>
<organism>
    <name type="scientific">Ovis aries</name>
    <name type="common">Sheep</name>
    <dbReference type="NCBI Taxonomy" id="9940"/>
    <lineage>
        <taxon>Eukaryota</taxon>
        <taxon>Metazoa</taxon>
        <taxon>Chordata</taxon>
        <taxon>Craniata</taxon>
        <taxon>Vertebrata</taxon>
        <taxon>Euteleostomi</taxon>
        <taxon>Mammalia</taxon>
        <taxon>Eutheria</taxon>
        <taxon>Laurasiatheria</taxon>
        <taxon>Artiodactyla</taxon>
        <taxon>Ruminantia</taxon>
        <taxon>Pecora</taxon>
        <taxon>Bovidae</taxon>
        <taxon>Caprinae</taxon>
        <taxon>Ovis</taxon>
    </lineage>
</organism>
<proteinExistence type="evidence at transcript level"/>
<feature type="chain" id="PRO_0000076470" description="Protein c-Fos">
    <location>
        <begin position="1" status="less than"/>
        <end position="195" status="greater than"/>
    </location>
</feature>
<feature type="domain" description="bZIP" evidence="5">
    <location>
        <begin position="1"/>
        <end position="56"/>
    </location>
</feature>
<feature type="region of interest" description="Basic motif; required for the activation of phospholipid synthesis, but not for CDS1-binding" evidence="5">
    <location>
        <begin position="1" status="less than"/>
        <end position="15"/>
    </location>
</feature>
<feature type="region of interest" description="Disordered" evidence="6">
    <location>
        <begin position="1"/>
        <end position="30"/>
    </location>
</feature>
<feature type="region of interest" description="Leucine-zipper" evidence="5">
    <location>
        <begin position="21"/>
        <end position="49"/>
    </location>
</feature>
<feature type="region of interest" description="Disordered" evidence="6">
    <location>
        <begin position="80"/>
        <end position="111"/>
    </location>
</feature>
<feature type="modified residue" description="Phosphothreonine" evidence="3">
    <location>
        <position position="88"/>
    </location>
</feature>
<feature type="modified residue" description="Phosphothreonine; by MAPK1 and MAPK3" evidence="2">
    <location>
        <position position="181"/>
    </location>
</feature>
<feature type="modified residue" description="Phosphothreonine; by MAPK1 and MAPK3" evidence="2">
    <location>
        <position position="187"/>
    </location>
</feature>
<feature type="cross-link" description="Glycyl lysine isopeptide (Lys-Gly) (interchain with G-Cter in SUMO); alternate" evidence="1">
    <location>
        <position position="121"/>
    </location>
</feature>
<feature type="cross-link" description="Glycyl lysine isopeptide (Lys-Gly) (interchain with G-Cter in SUMO2); alternate" evidence="2">
    <location>
        <position position="121"/>
    </location>
</feature>
<feature type="non-terminal residue">
    <location>
        <position position="1"/>
    </location>
</feature>
<feature type="non-terminal residue">
    <location>
        <position position="195"/>
    </location>
</feature>
<name>FOS_SHEEP</name>
<protein>
    <recommendedName>
        <fullName evidence="7">Protein c-Fos</fullName>
    </recommendedName>
    <alternativeName>
        <fullName>Cellular oncogene fos</fullName>
    </alternativeName>
    <alternativeName>
        <fullName evidence="7">Transcription factor AP-1 subunit c-Fos</fullName>
    </alternativeName>
</protein>
<accession>O02761</accession>
<accession>O97787</accession>
<dbReference type="EMBL" id="Y15747">
    <property type="protein sequence ID" value="CAA75757.1"/>
    <property type="molecule type" value="Genomic_DNA"/>
</dbReference>
<dbReference type="EMBL" id="U94719">
    <property type="protein sequence ID" value="AAB57839.1"/>
    <property type="molecule type" value="mRNA"/>
</dbReference>
<dbReference type="SMR" id="O02761"/>
<dbReference type="STRING" id="9940.ENSOARP00000001873"/>
<dbReference type="PaxDb" id="9940-ENSOARP00000001873"/>
<dbReference type="eggNOG" id="KOG1414">
    <property type="taxonomic scope" value="Eukaryota"/>
</dbReference>
<dbReference type="Proteomes" id="UP000002356">
    <property type="component" value="Unplaced"/>
</dbReference>
<dbReference type="GO" id="GO:0005829">
    <property type="term" value="C:cytosol"/>
    <property type="evidence" value="ECO:0007669"/>
    <property type="project" value="UniProtKB-SubCell"/>
</dbReference>
<dbReference type="GO" id="GO:0005783">
    <property type="term" value="C:endoplasmic reticulum"/>
    <property type="evidence" value="ECO:0007669"/>
    <property type="project" value="UniProtKB-SubCell"/>
</dbReference>
<dbReference type="GO" id="GO:0005634">
    <property type="term" value="C:nucleus"/>
    <property type="evidence" value="ECO:0007669"/>
    <property type="project" value="UniProtKB-SubCell"/>
</dbReference>
<dbReference type="GO" id="GO:0000981">
    <property type="term" value="F:DNA-binding transcription factor activity, RNA polymerase II-specific"/>
    <property type="evidence" value="ECO:0007669"/>
    <property type="project" value="TreeGrafter"/>
</dbReference>
<dbReference type="GO" id="GO:0000978">
    <property type="term" value="F:RNA polymerase II cis-regulatory region sequence-specific DNA binding"/>
    <property type="evidence" value="ECO:0007669"/>
    <property type="project" value="TreeGrafter"/>
</dbReference>
<dbReference type="CDD" id="cd14721">
    <property type="entry name" value="bZIP_Fos"/>
    <property type="match status" value="1"/>
</dbReference>
<dbReference type="FunFam" id="1.20.5.170:FF:000006">
    <property type="entry name" value="fos-related antigen 2 isoform X1"/>
    <property type="match status" value="1"/>
</dbReference>
<dbReference type="Gene3D" id="1.20.5.170">
    <property type="match status" value="1"/>
</dbReference>
<dbReference type="InterPro" id="IPR000837">
    <property type="entry name" value="AP-1"/>
</dbReference>
<dbReference type="InterPro" id="IPR004827">
    <property type="entry name" value="bZIP"/>
</dbReference>
<dbReference type="InterPro" id="IPR046347">
    <property type="entry name" value="bZIP_sf"/>
</dbReference>
<dbReference type="PANTHER" id="PTHR23351">
    <property type="entry name" value="FOS TRANSCRIPTION FACTOR-RELATED"/>
    <property type="match status" value="1"/>
</dbReference>
<dbReference type="PANTHER" id="PTHR23351:SF4">
    <property type="entry name" value="PROTEIN C-FOS"/>
    <property type="match status" value="1"/>
</dbReference>
<dbReference type="Pfam" id="PF00170">
    <property type="entry name" value="bZIP_1"/>
    <property type="match status" value="1"/>
</dbReference>
<dbReference type="PRINTS" id="PR00042">
    <property type="entry name" value="LEUZIPPRFOS"/>
</dbReference>
<dbReference type="SMART" id="SM00338">
    <property type="entry name" value="BRLZ"/>
    <property type="match status" value="1"/>
</dbReference>
<dbReference type="SUPFAM" id="SSF57959">
    <property type="entry name" value="Leucine zipper domain"/>
    <property type="match status" value="1"/>
</dbReference>
<dbReference type="PROSITE" id="PS50217">
    <property type="entry name" value="BZIP"/>
    <property type="match status" value="1"/>
</dbReference>
<sequence length="195" mass="21255">ERNKMAAAKCRNRRRELTDTLQAETDQLEDEKSALQTEIANLLKEKEKLEFILAAHRPACKIPDDLGFPEEMSVASLDLSGGLPEAATPESEEAFTLPLLNDPEPKPSLEPVKSISNVELKAEPFDDFLFPASSRPSGSETSRSVPDVDLSGSFYAADWEPLHSNSLGMGPMVTELEPLCTPVVTCTPGCTTYTS</sequence>
<comment type="function">
    <text evidence="1">Nuclear phosphoprotein which forms a tight but non-covalently linked complex with the JUN/AP-1 transcription factor. On TGF-beta activation, forms a multimeric SMAD3/SMAD4/JUN/FOS complex, at the AP1/SMAD-binding site to regulate TGF-beta-mediated signaling. Has a critical function in regulating the development of cells destined to form and maintain the skeleton. It is thought to have an important role in signal transduction, cell proliferation and differentiation (By similarity). In growing cells, activates phospholipid synthesis, possibly by activating CDS1 and PI4K2A. This activity requires Tyr-dephosphorylation and association with the endoplasmic reticulum (By similarity).</text>
</comment>
<comment type="subunit">
    <text evidence="2 3 4">Heterodimer; with JUN (By similarity). Component of the SMAD3/SMAD4/JUN/FOS complex required for synergistic TGF-beta-mediated transcription at the AP1-binding site (By similarity). Interacts with SMAD3; the interaction is weak even on TGF-beta activation (By similarity). Interacts with MAFB (By similarity). Interacts with TSC22D3 (via N-terminus); this interaction inhibits the binding of active AP1 to its target DNA (By similarity). Interacts with CDS1 and PI4K2A (By similarity). Interacts (via bZIP domain and leucine-zipper region) with the multiprotein chromatin-remodeling complexes SWI/SNF: SWI/SNF-A (BAF) subunits SMARCB1, SMARCC2 and SMARCD1 (By similarity). Interacts (via bZIP domain and leucine-zipper region) with ARID1A (By similarity).</text>
</comment>
<comment type="subcellular location">
    <subcellularLocation>
        <location evidence="5">Nucleus</location>
    </subcellularLocation>
    <subcellularLocation>
        <location evidence="1">Endoplasmic reticulum</location>
    </subcellularLocation>
    <subcellularLocation>
        <location evidence="1">Cytoplasm</location>
        <location evidence="1">Cytosol</location>
    </subcellularLocation>
    <text evidence="1">In quiescent cells, present in very small amounts in the cytosol. Following induction of cell growth, first localizes to the endoplasmic reticulum and only later to the nucleus. Localization at the endoplasmic reticulum requires Tyr-dephosphorylation (By similarity).</text>
</comment>
<comment type="induction">
    <text>Expression increases upon a variety of stimuli, including growth factors, cytokines, neurotransmitters, polypeptide hormones, stress and cell injury.</text>
</comment>
<comment type="PTM">
    <text evidence="1">Constitutively sumoylated with SUMO1, SUMO2 and SUMO3. Desumoylated by SENP2. Sumoylation requires heterodimerization with JUN and is enhanced by mitogen stimulation. Sumoylation inhibits the AP-1 transcriptional activity and is, itself, inhibited by Ras-activated phosphorylation on Thr-88 (By similarity).</text>
</comment>
<comment type="PTM">
    <text evidence="1">In quiescent cells, the small amount of FOS present is phosphorylated by SRC. This Tyr-phosphorylated form is cytosolic. In growing cells, dephosphorylated by PTPN2. Dephosphorylation leads to the association with endoplasmic reticulum membranes and activation of phospholipid synthesis (By similarity).</text>
</comment>
<comment type="similarity">
    <text evidence="7">Belongs to the bZIP family. Fos subfamily.</text>
</comment>